<gene>
    <name evidence="4" type="primary">attM</name>
    <name evidence="5" type="synonym">blcC</name>
    <name type="ordered locus">Atu5139</name>
    <name type="ORF">AGR_pAT_200</name>
</gene>
<name>AHLLM_AGRFC</name>
<sequence length="263" mass="29353">MTDIRLYMLQSGTLKCKVHNIKMNQGNGADYEIPVPFFLITHPAGHTVIDGGNAIEVATDPRGHWGGICDVYWPVLDKDQGCVDQIKALGFDPADVKYVVQSHLHLDHTGAIGRFPNATHIVQRSEYEYAFTPDWFAGGGYIRKDFDKPGLKWQFLNGAQDDYYDVYGDGTLTTIFTPGHAPGHQSFLVRLPNSKPLLLTIDAAYTLDHWEEKALPGFLASTVDTVRSVQKLRTYAEKHDATVVTGHDPDAWANFKKAPEFYA</sequence>
<proteinExistence type="inferred from homology"/>
<comment type="catalytic activity">
    <reaction evidence="2">
        <text>an N-acyl-L-homoserine lactone + H2O = an N-acyl-L-homoserine + H(+)</text>
        <dbReference type="Rhea" id="RHEA:22576"/>
        <dbReference type="ChEBI" id="CHEBI:15377"/>
        <dbReference type="ChEBI" id="CHEBI:15378"/>
        <dbReference type="ChEBI" id="CHEBI:55474"/>
        <dbReference type="ChEBI" id="CHEBI:58921"/>
        <dbReference type="EC" id="3.1.1.81"/>
    </reaction>
</comment>
<comment type="cofactor">
    <cofactor evidence="1">
        <name>Zn(2+)</name>
        <dbReference type="ChEBI" id="CHEBI:29105"/>
    </cofactor>
    <text evidence="1">Binds 2 Zn(2+) ions per subunit.</text>
</comment>
<comment type="similarity">
    <text evidence="3">Belongs to the metallo-beta-lactamase superfamily.</text>
</comment>
<comment type="sequence caution" evidence="3">
    <conflict type="erroneous initiation">
        <sequence resource="EMBL-CDS" id="AAD43990"/>
    </conflict>
    <text>Truncated N-terminus.</text>
</comment>
<comment type="sequence caution" evidence="3">
    <conflict type="erroneous initiation">
        <sequence resource="EMBL-CDS" id="AAK90512"/>
    </conflict>
    <text>Truncated N-terminus.</text>
</comment>
<reference evidence="4" key="1">
    <citation type="journal article" date="2000" name="Biochim. Biophys. Acta">
        <title>A region of the Agrobacterium tumefaciens chromosome containing genes required for virulence and attachment to host cells.</title>
        <authorList>
            <person name="Matthysse A.G."/>
            <person name="Yarnall H."/>
            <person name="Boles S.B."/>
            <person name="McMahan S."/>
        </authorList>
    </citation>
    <scope>NUCLEOTIDE SEQUENCE [GENOMIC DNA]</scope>
</reference>
<reference evidence="5" key="2">
    <citation type="journal article" date="2001" name="Science">
        <title>Genome sequence of the plant pathogen and biotechnology agent Agrobacterium tumefaciens C58.</title>
        <authorList>
            <person name="Goodner B."/>
            <person name="Hinkle G."/>
            <person name="Gattung S."/>
            <person name="Miller N."/>
            <person name="Blanchard M."/>
            <person name="Qurollo B."/>
            <person name="Goldman B.S."/>
            <person name="Cao Y."/>
            <person name="Askenazi M."/>
            <person name="Halling C."/>
            <person name="Mullin L."/>
            <person name="Houmiel K."/>
            <person name="Gordon J."/>
            <person name="Vaudin M."/>
            <person name="Iartchouk O."/>
            <person name="Epp A."/>
            <person name="Liu F."/>
            <person name="Wollam C."/>
            <person name="Allinger M."/>
            <person name="Doughty D."/>
            <person name="Scott C."/>
            <person name="Lappas C."/>
            <person name="Markelz B."/>
            <person name="Flanagan C."/>
            <person name="Crowell C."/>
            <person name="Gurson J."/>
            <person name="Lomo C."/>
            <person name="Sear C."/>
            <person name="Strub G."/>
            <person name="Cielo C."/>
            <person name="Slater S."/>
        </authorList>
    </citation>
    <scope>NUCLEOTIDE SEQUENCE [LARGE SCALE GENOMIC DNA]</scope>
    <source>
        <strain>C58 / ATCC 33970</strain>
    </source>
</reference>
<geneLocation type="plasmid">
    <name>AT</name>
</geneLocation>
<organism>
    <name type="scientific">Agrobacterium fabrum (strain C58 / ATCC 33970)</name>
    <name type="common">Agrobacterium tumefaciens (strain C58)</name>
    <dbReference type="NCBI Taxonomy" id="176299"/>
    <lineage>
        <taxon>Bacteria</taxon>
        <taxon>Pseudomonadati</taxon>
        <taxon>Pseudomonadota</taxon>
        <taxon>Alphaproteobacteria</taxon>
        <taxon>Hyphomicrobiales</taxon>
        <taxon>Rhizobiaceae</taxon>
        <taxon>Rhizobium/Agrobacterium group</taxon>
        <taxon>Agrobacterium</taxon>
        <taxon>Agrobacterium tumefaciens complex</taxon>
    </lineage>
</organism>
<keyword id="KW-0378">Hydrolase</keyword>
<keyword id="KW-0479">Metal-binding</keyword>
<keyword id="KW-0614">Plasmid</keyword>
<keyword id="KW-1185">Reference proteome</keyword>
<keyword id="KW-0862">Zinc</keyword>
<dbReference type="EC" id="3.1.1.81"/>
<dbReference type="EMBL" id="U59485">
    <property type="protein sequence ID" value="AAD43990.1"/>
    <property type="status" value="ALT_INIT"/>
    <property type="molecule type" value="Genomic_DNA"/>
</dbReference>
<dbReference type="EMBL" id="AE007872">
    <property type="protein sequence ID" value="AAK90512.2"/>
    <property type="status" value="ALT_INIT"/>
    <property type="molecule type" value="Genomic_DNA"/>
</dbReference>
<dbReference type="PIR" id="AG3176">
    <property type="entry name" value="AG3176"/>
</dbReference>
<dbReference type="RefSeq" id="NP_396071.2">
    <property type="nucleotide sequence ID" value="NC_003064.2"/>
</dbReference>
<dbReference type="RefSeq" id="WP_019565706.1">
    <property type="nucleotide sequence ID" value="NC_003064.2"/>
</dbReference>
<dbReference type="SMR" id="Q7D3U0"/>
<dbReference type="EnsemblBacteria" id="AAK90512">
    <property type="protein sequence ID" value="AAK90512"/>
    <property type="gene ID" value="Atu5139"/>
</dbReference>
<dbReference type="GeneID" id="1136912"/>
<dbReference type="KEGG" id="atu:Atu5139"/>
<dbReference type="PATRIC" id="fig|176299.10.peg.4827"/>
<dbReference type="eggNOG" id="COG0491">
    <property type="taxonomic scope" value="Bacteria"/>
</dbReference>
<dbReference type="HOGENOM" id="CLU_030571_3_2_5"/>
<dbReference type="OrthoDB" id="9773738at2"/>
<dbReference type="Proteomes" id="UP000000813">
    <property type="component" value="Plasmid At"/>
</dbReference>
<dbReference type="GO" id="GO:0102007">
    <property type="term" value="F:acyl-L-homoserine-lactone lactonohydrolase activity"/>
    <property type="evidence" value="ECO:0007669"/>
    <property type="project" value="UniProtKB-EC"/>
</dbReference>
<dbReference type="GO" id="GO:0046872">
    <property type="term" value="F:metal ion binding"/>
    <property type="evidence" value="ECO:0007669"/>
    <property type="project" value="UniProtKB-KW"/>
</dbReference>
<dbReference type="CDD" id="cd07729">
    <property type="entry name" value="AHL_lactonase_MBL-fold"/>
    <property type="match status" value="1"/>
</dbReference>
<dbReference type="Gene3D" id="3.60.15.10">
    <property type="entry name" value="Ribonuclease Z/Hydroxyacylglutathione hydrolase-like"/>
    <property type="match status" value="1"/>
</dbReference>
<dbReference type="InterPro" id="IPR054889">
    <property type="entry name" value="AHLLactAttM"/>
</dbReference>
<dbReference type="InterPro" id="IPR051013">
    <property type="entry name" value="MBL_superfamily_lactonases"/>
</dbReference>
<dbReference type="InterPro" id="IPR001279">
    <property type="entry name" value="Metallo-B-lactamas"/>
</dbReference>
<dbReference type="InterPro" id="IPR036866">
    <property type="entry name" value="RibonucZ/Hydroxyglut_hydro"/>
</dbReference>
<dbReference type="NCBIfam" id="NF045700">
    <property type="entry name" value="AHLLactAttM"/>
    <property type="match status" value="1"/>
</dbReference>
<dbReference type="PANTHER" id="PTHR42978:SF2">
    <property type="entry name" value="102 KBASES UNSTABLE REGION: FROM 1 TO 119443"/>
    <property type="match status" value="1"/>
</dbReference>
<dbReference type="PANTHER" id="PTHR42978">
    <property type="entry name" value="QUORUM-QUENCHING LACTONASE YTNP-RELATED-RELATED"/>
    <property type="match status" value="1"/>
</dbReference>
<dbReference type="Pfam" id="PF00753">
    <property type="entry name" value="Lactamase_B"/>
    <property type="match status" value="1"/>
</dbReference>
<dbReference type="SMART" id="SM00849">
    <property type="entry name" value="Lactamase_B"/>
    <property type="match status" value="1"/>
</dbReference>
<dbReference type="SUPFAM" id="SSF56281">
    <property type="entry name" value="Metallo-hydrolase/oxidoreductase"/>
    <property type="match status" value="1"/>
</dbReference>
<feature type="chain" id="PRO_0000403295" description="N-acyl homoserine lactonase AttM">
    <location>
        <begin position="1"/>
        <end position="263"/>
    </location>
</feature>
<feature type="binding site" evidence="1">
    <location>
        <position position="103"/>
    </location>
    <ligand>
        <name>Zn(2+)</name>
        <dbReference type="ChEBI" id="CHEBI:29105"/>
        <label>1</label>
    </ligand>
</feature>
<feature type="binding site" evidence="1">
    <location>
        <position position="105"/>
    </location>
    <ligand>
        <name>Zn(2+)</name>
        <dbReference type="ChEBI" id="CHEBI:29105"/>
        <label>1</label>
    </ligand>
</feature>
<feature type="binding site" evidence="1">
    <location>
        <position position="107"/>
    </location>
    <ligand>
        <name>Zn(2+)</name>
        <dbReference type="ChEBI" id="CHEBI:29105"/>
        <label>2</label>
    </ligand>
</feature>
<feature type="binding site" evidence="1">
    <location>
        <position position="108"/>
    </location>
    <ligand>
        <name>Zn(2+)</name>
        <dbReference type="ChEBI" id="CHEBI:29105"/>
        <label>2</label>
    </ligand>
</feature>
<feature type="binding site" evidence="1">
    <location>
        <position position="180"/>
    </location>
    <ligand>
        <name>Zn(2+)</name>
        <dbReference type="ChEBI" id="CHEBI:29105"/>
        <label>1</label>
    </ligand>
</feature>
<feature type="binding site" evidence="1">
    <location>
        <position position="202"/>
    </location>
    <ligand>
        <name>Zn(2+)</name>
        <dbReference type="ChEBI" id="CHEBI:29105"/>
        <label>1</label>
    </ligand>
</feature>
<feature type="binding site" evidence="1">
    <location>
        <position position="202"/>
    </location>
    <ligand>
        <name>Zn(2+)</name>
        <dbReference type="ChEBI" id="CHEBI:29105"/>
        <label>2</label>
    </ligand>
</feature>
<feature type="binding site" evidence="1">
    <location>
        <position position="247"/>
    </location>
    <ligand>
        <name>Zn(2+)</name>
        <dbReference type="ChEBI" id="CHEBI:29105"/>
        <label>2</label>
    </ligand>
</feature>
<accession>Q7D3U0</accession>
<accession>Q9WWD3</accession>
<protein>
    <recommendedName>
        <fullName evidence="2">N-acyl homoserine lactonase AttM</fullName>
        <shortName evidence="2">AHL-lactonase AttM</shortName>
        <ecNumber>3.1.1.81</ecNumber>
    </recommendedName>
</protein>
<evidence type="ECO:0000250" key="1">
    <source>
        <dbReference type="UniProtKB" id="Q7B8B9"/>
    </source>
</evidence>
<evidence type="ECO:0000250" key="2">
    <source>
        <dbReference type="UniProtKB" id="Q8VPD5"/>
    </source>
</evidence>
<evidence type="ECO:0000305" key="3"/>
<evidence type="ECO:0000312" key="4">
    <source>
        <dbReference type="EMBL" id="AAD43990.1"/>
    </source>
</evidence>
<evidence type="ECO:0000312" key="5">
    <source>
        <dbReference type="EMBL" id="AAK90512.2"/>
    </source>
</evidence>